<name>NU6M_CARAU</name>
<accession>O78689</accession>
<organism>
    <name type="scientific">Carassius auratus</name>
    <name type="common">Goldfish</name>
    <dbReference type="NCBI Taxonomy" id="7957"/>
    <lineage>
        <taxon>Eukaryota</taxon>
        <taxon>Metazoa</taxon>
        <taxon>Chordata</taxon>
        <taxon>Craniata</taxon>
        <taxon>Vertebrata</taxon>
        <taxon>Euteleostomi</taxon>
        <taxon>Actinopterygii</taxon>
        <taxon>Neopterygii</taxon>
        <taxon>Teleostei</taxon>
        <taxon>Ostariophysi</taxon>
        <taxon>Cypriniformes</taxon>
        <taxon>Cyprinidae</taxon>
        <taxon>Cyprininae</taxon>
        <taxon>Carassius</taxon>
    </lineage>
</organism>
<gene>
    <name type="primary">MT-ND6</name>
    <name type="synonym">MTND6</name>
    <name type="synonym">NADH6</name>
    <name type="synonym">ND6</name>
</gene>
<keyword id="KW-0249">Electron transport</keyword>
<keyword id="KW-0472">Membrane</keyword>
<keyword id="KW-0496">Mitochondrion</keyword>
<keyword id="KW-0520">NAD</keyword>
<keyword id="KW-1185">Reference proteome</keyword>
<keyword id="KW-0679">Respiratory chain</keyword>
<keyword id="KW-1278">Translocase</keyword>
<keyword id="KW-0812">Transmembrane</keyword>
<keyword id="KW-1133">Transmembrane helix</keyword>
<keyword id="KW-0813">Transport</keyword>
<keyword id="KW-0830">Ubiquinone</keyword>
<protein>
    <recommendedName>
        <fullName>NADH-ubiquinone oxidoreductase chain 6</fullName>
        <ecNumber>7.1.1.2</ecNumber>
    </recommendedName>
    <alternativeName>
        <fullName>NADH dehydrogenase subunit 6</fullName>
    </alternativeName>
</protein>
<proteinExistence type="inferred from homology"/>
<evidence type="ECO:0000250" key="1"/>
<evidence type="ECO:0000255" key="2"/>
<evidence type="ECO:0000305" key="3"/>
<geneLocation type="mitochondrion"/>
<dbReference type="EC" id="7.1.1.2"/>
<dbReference type="EMBL" id="AB006953">
    <property type="protein sequence ID" value="BAA31249.1"/>
    <property type="molecule type" value="Genomic_DNA"/>
</dbReference>
<dbReference type="EMBL" id="AB045144">
    <property type="protein sequence ID" value="BAB40359.1"/>
    <property type="molecule type" value="Genomic_DNA"/>
</dbReference>
<dbReference type="RefSeq" id="NP_008599.1">
    <property type="nucleotide sequence ID" value="NC_002079.1"/>
</dbReference>
<dbReference type="GeneID" id="808424"/>
<dbReference type="CTD" id="4541"/>
<dbReference type="OrthoDB" id="9837654at2759"/>
<dbReference type="Proteomes" id="UP000515129">
    <property type="component" value="Mitochondrion MT"/>
</dbReference>
<dbReference type="GO" id="GO:0031966">
    <property type="term" value="C:mitochondrial membrane"/>
    <property type="evidence" value="ECO:0007669"/>
    <property type="project" value="UniProtKB-SubCell"/>
</dbReference>
<dbReference type="GO" id="GO:0008137">
    <property type="term" value="F:NADH dehydrogenase (ubiquinone) activity"/>
    <property type="evidence" value="ECO:0007669"/>
    <property type="project" value="UniProtKB-EC"/>
</dbReference>
<dbReference type="Gene3D" id="1.20.120.1200">
    <property type="entry name" value="NADH-ubiquinone/plastoquinone oxidoreductase chain 6, subunit NuoJ"/>
    <property type="match status" value="1"/>
</dbReference>
<dbReference type="InterPro" id="IPR050269">
    <property type="entry name" value="ComplexI_Subunit6"/>
</dbReference>
<dbReference type="InterPro" id="IPR001457">
    <property type="entry name" value="NADH_UbQ/plastoQ_OxRdtase_su6"/>
</dbReference>
<dbReference type="InterPro" id="IPR042106">
    <property type="entry name" value="Nuo/plastoQ_OxRdtase_6_NuoJ"/>
</dbReference>
<dbReference type="PANTHER" id="PTHR11435">
    <property type="entry name" value="NADH UBIQUINONE OXIDOREDUCTASE SUBUNIT ND6"/>
    <property type="match status" value="1"/>
</dbReference>
<dbReference type="PANTHER" id="PTHR11435:SF1">
    <property type="entry name" value="NADH-UBIQUINONE OXIDOREDUCTASE CHAIN 6"/>
    <property type="match status" value="1"/>
</dbReference>
<dbReference type="Pfam" id="PF00499">
    <property type="entry name" value="Oxidored_q3"/>
    <property type="match status" value="1"/>
</dbReference>
<feature type="chain" id="PRO_0000118261" description="NADH-ubiquinone oxidoreductase chain 6">
    <location>
        <begin position="1"/>
        <end position="173"/>
    </location>
</feature>
<feature type="transmembrane region" description="Helical" evidence="2">
    <location>
        <begin position="1"/>
        <end position="21"/>
    </location>
</feature>
<feature type="transmembrane region" description="Helical" evidence="2">
    <location>
        <begin position="25"/>
        <end position="45"/>
    </location>
</feature>
<feature type="transmembrane region" description="Helical" evidence="2">
    <location>
        <begin position="53"/>
        <end position="73"/>
    </location>
</feature>
<feature type="transmembrane region" description="Helical" evidence="2">
    <location>
        <begin position="87"/>
        <end position="107"/>
    </location>
</feature>
<feature type="transmembrane region" description="Helical" evidence="2">
    <location>
        <begin position="141"/>
        <end position="161"/>
    </location>
</feature>
<sequence>MTYFMFLLLMALVVGLVAVASNPTPYFAALGLVVAAGVGCGVLVGHGGSFLSLVLFLIYLGGMLVVFAYSAALAAEPYPEAWGSRSVLGYVLVYLLGVGLVAGFFWGGWYEGSWVVVDGLKEFSVLRGDVSGVAVMYSSGGGMLVICAWVLLLTLLVVLELTRGLSRGALRAV</sequence>
<reference key="1">
    <citation type="journal article" date="1998" name="Zool. Sci.">
        <title>The complete sequence of mitochondrial genome from a gynogenetic triploid 'ginbuna' (Carassius auratus langsdorfi).</title>
        <authorList>
            <person name="Murakami M."/>
            <person name="Yamashita Y."/>
            <person name="Fujitani H."/>
        </authorList>
    </citation>
    <scope>NUCLEOTIDE SEQUENCE [GENOMIC DNA]</scope>
    <source>
        <strain>AZ3 / Langsdorfi</strain>
        <tissue>Oocyte</tissue>
    </source>
</reference>
<reference key="2">
    <citation type="submission" date="2000-06" db="EMBL/GenBank/DDBJ databases">
        <title>Carassius auratus cuvieri mitochondrial DNA, complete sequence.</title>
        <authorList>
            <person name="Murakami M."/>
        </authorList>
    </citation>
    <scope>NUCLEOTIDE SEQUENCE [GENOMIC DNA]</scope>
    <source>
        <strain>Cuvieri</strain>
    </source>
</reference>
<comment type="function">
    <text evidence="1">Core subunit of the mitochondrial membrane respiratory chain NADH dehydrogenase (Complex I) that is believed to belong to the minimal assembly required for catalysis. Complex I functions in the transfer of electrons from NADH to the respiratory chain. The immediate electron acceptor for the enzyme is believed to be ubiquinone (By similarity).</text>
</comment>
<comment type="catalytic activity">
    <reaction>
        <text>a ubiquinone + NADH + 5 H(+)(in) = a ubiquinol + NAD(+) + 4 H(+)(out)</text>
        <dbReference type="Rhea" id="RHEA:29091"/>
        <dbReference type="Rhea" id="RHEA-COMP:9565"/>
        <dbReference type="Rhea" id="RHEA-COMP:9566"/>
        <dbReference type="ChEBI" id="CHEBI:15378"/>
        <dbReference type="ChEBI" id="CHEBI:16389"/>
        <dbReference type="ChEBI" id="CHEBI:17976"/>
        <dbReference type="ChEBI" id="CHEBI:57540"/>
        <dbReference type="ChEBI" id="CHEBI:57945"/>
        <dbReference type="EC" id="7.1.1.2"/>
    </reaction>
</comment>
<comment type="subcellular location">
    <subcellularLocation>
        <location evidence="3">Mitochondrion membrane</location>
        <topology evidence="3">Multi-pass membrane protein</topology>
    </subcellularLocation>
</comment>
<comment type="similarity">
    <text evidence="3">Belongs to the complex I subunit 6 family.</text>
</comment>